<proteinExistence type="inferred from homology"/>
<organism>
    <name type="scientific">Escherichia coli O157:H7</name>
    <dbReference type="NCBI Taxonomy" id="83334"/>
    <lineage>
        <taxon>Bacteria</taxon>
        <taxon>Pseudomonadati</taxon>
        <taxon>Pseudomonadota</taxon>
        <taxon>Gammaproteobacteria</taxon>
        <taxon>Enterobacterales</taxon>
        <taxon>Enterobacteriaceae</taxon>
        <taxon>Escherichia</taxon>
    </lineage>
</organism>
<sequence length="706" mass="79815">MMSKCSSHNSLYALILLAQYHNITVNAETIRHQYNTHTQDFGVTEWLLAAKSIGLKAKYVEKHFSRLSIISLPALIWRDDGKHYILSRITKDSSRYLVYDPEQHQSLTFSRDEFEKLYQGKVILVTSRATVVGELAKFDFSWFIPSVVKYRRILLEVLTVSAFIQFLALITPLFFQVVMDKVLVHRGFSTLNIITIAFIIVILFEVILTGARTYIFSHTTSRIDVELGAKLFRHLLALPVSYFENRRVGETVARVRELEQIRNFLTGQALTSVLDLFFSVIFFCVMWYYSPQLTLVILLSLPCYVIWSLFISPLLRRRLDDKFLRNAENQAFLVETVTAINTIKSMAVSPQMIATWDKQLAGYVASSFRVNLVAMTGQQGIQLIQKSVMVISLWMGAHLVISGEISIGQLIAFNMLAGQVIAPVIRLAHLWQDFQQVGISVERLGDVLNTPVEKKSGRNILPEIQGDIEFKNVRFRYSSDGNVILNNINLYISKGDVIGIVGRSGSGKSTLTKLLQRFYIPETGQILIDGHDLSLADPEWLRRQIGVVLQENILLNRSIIDNITLASPAVSMEQAIEAARLAGAHDFIRELKEGYNTIVGEQGVGLSGGQRQRIAIARALVTNPRILIFDEATSALDYESENIIMKNMSRICKNRTVIIIAHRLSTVKNANRIIVMDNGFISEDGTHKELISKKDSLYAYLYQLQA</sequence>
<feature type="chain" id="PRO_0000092375" description="Alpha-hemolysin translocation ATP-binding protein HlyB">
    <location>
        <begin position="1"/>
        <end position="706"/>
    </location>
</feature>
<feature type="transmembrane region" description="Helical" evidence="4">
    <location>
        <begin position="153"/>
        <end position="173"/>
    </location>
</feature>
<feature type="transmembrane region" description="Helical" evidence="4">
    <location>
        <begin position="191"/>
        <end position="211"/>
    </location>
</feature>
<feature type="transmembrane region" description="Helical" evidence="4">
    <location>
        <begin position="269"/>
        <end position="289"/>
    </location>
</feature>
<feature type="transmembrane region" description="Helical" evidence="4">
    <location>
        <begin position="295"/>
        <end position="315"/>
    </location>
</feature>
<feature type="transmembrane region" description="Helical" evidence="4">
    <location>
        <begin position="388"/>
        <end position="408"/>
    </location>
</feature>
<feature type="domain" description="Peptidase C39" evidence="2">
    <location>
        <begin position="1"/>
        <end position="125"/>
    </location>
</feature>
<feature type="domain" description="ABC transmembrane type-1" evidence="4">
    <location>
        <begin position="154"/>
        <end position="436"/>
    </location>
</feature>
<feature type="domain" description="ABC transporter" evidence="2 3">
    <location>
        <begin position="468"/>
        <end position="703"/>
    </location>
</feature>
<feature type="active site" evidence="2">
    <location>
        <position position="83"/>
    </location>
</feature>
<feature type="binding site" evidence="2 3">
    <location>
        <begin position="502"/>
        <end position="509"/>
    </location>
    <ligand>
        <name>ATP</name>
        <dbReference type="ChEBI" id="CHEBI:30616"/>
    </ligand>
</feature>
<feature type="sequence conflict" description="In Ref. 1; CAA60043." evidence="5" ref="1">
    <original>E</original>
    <variation>D</variation>
    <location>
        <position position="259"/>
    </location>
</feature>
<protein>
    <recommendedName>
        <fullName>Alpha-hemolysin translocation ATP-binding protein HlyB</fullName>
    </recommendedName>
    <alternativeName>
        <fullName>EHEC-HlyB protein</fullName>
    </alternativeName>
</protein>
<gene>
    <name type="primary">hlyB</name>
    <name type="ordered locus">L7049</name>
    <name type="ordered locus">ECO57PM18</name>
</gene>
<name>HLYB_ECO57</name>
<accession>Q46717</accession>
<accession>Q47462</accession>
<accession>Q79D74</accession>
<accession>Q7BSV0</accession>
<reference key="1">
    <citation type="journal article" date="1996" name="Microbiology">
        <title>Analysis of the EHEC hly operon and its location in the physical map of the large plasmid of enterohemorrhagic Esherichia coli 0157:H7.</title>
        <authorList>
            <person name="Schmidt H."/>
            <person name="Kernbach C."/>
            <person name="Karch H."/>
        </authorList>
    </citation>
    <scope>NUCLEOTIDE SEQUENCE [GENOMIC DNA]</scope>
    <source>
        <strain>O157:H7 / EDL933 / ATCC 700927 / EHEC</strain>
    </source>
</reference>
<reference key="2">
    <citation type="journal article" date="1998" name="Nucleic Acids Res.">
        <title>The complete DNA sequence and analysis of the large virulence plasmid of Escherichia coli O157:H7.</title>
        <authorList>
            <person name="Burland V."/>
            <person name="Shao Y."/>
            <person name="Perna N.T."/>
            <person name="Plunkett G. III"/>
            <person name="Sofia H.J."/>
            <person name="Blattner F.R."/>
        </authorList>
    </citation>
    <scope>NUCLEOTIDE SEQUENCE [LARGE SCALE GENOMIC DNA]</scope>
    <source>
        <strain>O157:H7 / EDL933 / ATCC 700927 / EHEC</strain>
    </source>
</reference>
<reference key="3">
    <citation type="journal article" date="1998" name="DNA Res.">
        <title>Complete nucleotide sequences of 93-kb and 3.3-kb plasmids of an enterohemorrhagic Escherichia coli O157:H7 derived from Sakai outbreak.</title>
        <authorList>
            <person name="Makino K."/>
            <person name="Ishii K."/>
            <person name="Yasunaga T."/>
            <person name="Hattori M."/>
            <person name="Yokoyama K."/>
            <person name="Yatsudo H.C."/>
            <person name="Kubota Y."/>
            <person name="Yamaichi Y."/>
            <person name="Iida T."/>
            <person name="Yamamoto K."/>
            <person name="Honda T."/>
            <person name="Han C.G."/>
            <person name="Ohtsubo A."/>
            <person name="Kasamatsu M."/>
            <person name="Hayashi T."/>
            <person name="Kuhara S."/>
            <person name="Shinagawa H."/>
        </authorList>
    </citation>
    <scope>NUCLEOTIDE SEQUENCE [LARGE SCALE GENOMIC DNA]</scope>
    <source>
        <strain>O157:H7 / Sakai / RIMD 0509952 / EHEC</strain>
    </source>
</reference>
<reference key="4">
    <citation type="submission" date="1994-07" db="EMBL/GenBank/DDBJ databases">
        <authorList>
            <person name="Hall R.H."/>
            <person name="Xu J."/>
            <person name="Walderhaug M.O."/>
        </authorList>
    </citation>
    <scope>NUCLEOTIDE SEQUENCE [GENOMIC DNA] OF 1-331</scope>
    <source>
        <strain>O157:H7 / EHEC</strain>
    </source>
</reference>
<comment type="function">
    <text evidence="1">Part of the ABC transporter complex HlyBD involved in hemolysin export. Transmembrane domains (TMD) form a pore in the inner membrane and the ATP-binding domain (NBD) is responsible for energy generation (By similarity).</text>
</comment>
<comment type="subunit">
    <text evidence="1">Homodimer.</text>
</comment>
<comment type="subcellular location">
    <subcellularLocation>
        <location evidence="5">Cell inner membrane</location>
        <topology evidence="5">Multi-pass membrane protein</topology>
    </subcellularLocation>
</comment>
<comment type="domain">
    <text>In HlyB the peptidase C39 domain, the ATP-binding domain (NBD) and the transmembrane domain (TMD) are fused.</text>
</comment>
<comment type="miscellaneous">
    <text evidence="1">The complex HlyBD-TolC (OMF) forms a single transport channel across the two membranes, allowing direct export of alpha-hemolysin. These channel is involved in type 1 secretion system (By similarity).</text>
</comment>
<comment type="similarity">
    <text evidence="5">Belongs to the ABC transporter superfamily. Protein-1 exporter (TC 3.A.1.109) family.</text>
</comment>
<comment type="caution">
    <text evidence="5">Asn-9 is present instead of the conserved Cys which is expected to be the active site residue of peptidase C39. Thus they are presumed to be without peptidase activity.</text>
</comment>
<keyword id="KW-0067">ATP-binding</keyword>
<keyword id="KW-0997">Cell inner membrane</keyword>
<keyword id="KW-1003">Cell membrane</keyword>
<keyword id="KW-0378">Hydrolase</keyword>
<keyword id="KW-0472">Membrane</keyword>
<keyword id="KW-0547">Nucleotide-binding</keyword>
<keyword id="KW-0614">Plasmid</keyword>
<keyword id="KW-1185">Reference proteome</keyword>
<keyword id="KW-0812">Transmembrane</keyword>
<keyword id="KW-1133">Transmembrane helix</keyword>
<keyword id="KW-0813">Transport</keyword>
<dbReference type="EMBL" id="X86087">
    <property type="protein sequence ID" value="CAA60043.1"/>
    <property type="molecule type" value="Genomic_DNA"/>
</dbReference>
<dbReference type="EMBL" id="AF074613">
    <property type="protein sequence ID" value="AAC70117.1"/>
    <property type="molecule type" value="Genomic_DNA"/>
</dbReference>
<dbReference type="EMBL" id="AB011549">
    <property type="protein sequence ID" value="BAA31775.1"/>
    <property type="molecule type" value="Genomic_DNA"/>
</dbReference>
<dbReference type="EMBL" id="U12572">
    <property type="protein sequence ID" value="AAA20545.2"/>
    <property type="molecule type" value="Genomic_DNA"/>
</dbReference>
<dbReference type="PIR" id="T00228">
    <property type="entry name" value="T00228"/>
</dbReference>
<dbReference type="RefSeq" id="NP_052625.1">
    <property type="nucleotide sequence ID" value="NC_002128.1"/>
</dbReference>
<dbReference type="RefSeq" id="WP_000987091.1">
    <property type="nucleotide sequence ID" value="NZ_VOAI01000036.1"/>
</dbReference>
<dbReference type="SMR" id="Q46717"/>
<dbReference type="GeneID" id="1789727"/>
<dbReference type="KEGG" id="ece:Z_L7049"/>
<dbReference type="KEGG" id="ecs:pO157p19"/>
<dbReference type="PATRIC" id="fig|386585.9.peg.22"/>
<dbReference type="eggNOG" id="COG2274">
    <property type="taxonomic scope" value="Bacteria"/>
</dbReference>
<dbReference type="HOGENOM" id="CLU_000604_95_4_6"/>
<dbReference type="OMA" id="HDRWASG"/>
<dbReference type="Proteomes" id="UP000000558">
    <property type="component" value="Plasmid pO157"/>
</dbReference>
<dbReference type="Proteomes" id="UP000002519">
    <property type="component" value="Plasmid pO157"/>
</dbReference>
<dbReference type="GO" id="GO:0005886">
    <property type="term" value="C:plasma membrane"/>
    <property type="evidence" value="ECO:0007669"/>
    <property type="project" value="UniProtKB-SubCell"/>
</dbReference>
<dbReference type="GO" id="GO:0030256">
    <property type="term" value="C:type I protein secretion system complex"/>
    <property type="evidence" value="ECO:0007669"/>
    <property type="project" value="InterPro"/>
</dbReference>
<dbReference type="GO" id="GO:0015421">
    <property type="term" value="F:ABC-type oligopeptide transporter activity"/>
    <property type="evidence" value="ECO:0007669"/>
    <property type="project" value="TreeGrafter"/>
</dbReference>
<dbReference type="GO" id="GO:0005524">
    <property type="term" value="F:ATP binding"/>
    <property type="evidence" value="ECO:0007669"/>
    <property type="project" value="UniProtKB-KW"/>
</dbReference>
<dbReference type="GO" id="GO:0016887">
    <property type="term" value="F:ATP hydrolysis activity"/>
    <property type="evidence" value="ECO:0007669"/>
    <property type="project" value="InterPro"/>
</dbReference>
<dbReference type="GO" id="GO:0008233">
    <property type="term" value="F:peptidase activity"/>
    <property type="evidence" value="ECO:0007669"/>
    <property type="project" value="InterPro"/>
</dbReference>
<dbReference type="GO" id="GO:0030253">
    <property type="term" value="P:protein secretion by the type I secretion system"/>
    <property type="evidence" value="ECO:0007669"/>
    <property type="project" value="InterPro"/>
</dbReference>
<dbReference type="GO" id="GO:0006508">
    <property type="term" value="P:proteolysis"/>
    <property type="evidence" value="ECO:0007669"/>
    <property type="project" value="InterPro"/>
</dbReference>
<dbReference type="CDD" id="cd18588">
    <property type="entry name" value="ABC_6TM_CyaB_HlyB_like"/>
    <property type="match status" value="1"/>
</dbReference>
<dbReference type="CDD" id="cd02417">
    <property type="entry name" value="Peptidase_C39_likeA"/>
    <property type="match status" value="1"/>
</dbReference>
<dbReference type="FunFam" id="3.40.50.300:FF:000299">
    <property type="entry name" value="ABC transporter ATP-binding protein/permease"/>
    <property type="match status" value="1"/>
</dbReference>
<dbReference type="FunFam" id="1.20.1560.10:FF:000056">
    <property type="entry name" value="Alpha-hemolysin translocation ATP-binding protein HlyB"/>
    <property type="match status" value="1"/>
</dbReference>
<dbReference type="Gene3D" id="1.20.1560.10">
    <property type="entry name" value="ABC transporter type 1, transmembrane domain"/>
    <property type="match status" value="1"/>
</dbReference>
<dbReference type="Gene3D" id="3.90.70.10">
    <property type="entry name" value="Cysteine proteinases"/>
    <property type="match status" value="1"/>
</dbReference>
<dbReference type="Gene3D" id="3.40.50.300">
    <property type="entry name" value="P-loop containing nucleotide triphosphate hydrolases"/>
    <property type="match status" value="1"/>
</dbReference>
<dbReference type="InterPro" id="IPR003593">
    <property type="entry name" value="AAA+_ATPase"/>
</dbReference>
<dbReference type="InterPro" id="IPR011527">
    <property type="entry name" value="ABC1_TM_dom"/>
</dbReference>
<dbReference type="InterPro" id="IPR036640">
    <property type="entry name" value="ABC1_TM_sf"/>
</dbReference>
<dbReference type="InterPro" id="IPR003439">
    <property type="entry name" value="ABC_transporter-like_ATP-bd"/>
</dbReference>
<dbReference type="InterPro" id="IPR017871">
    <property type="entry name" value="ABC_transporter-like_CS"/>
</dbReference>
<dbReference type="InterPro" id="IPR010132">
    <property type="entry name" value="ATPase_T1SS_HlyB"/>
</dbReference>
<dbReference type="InterPro" id="IPR027417">
    <property type="entry name" value="P-loop_NTPase"/>
</dbReference>
<dbReference type="InterPro" id="IPR005074">
    <property type="entry name" value="Peptidase_C39"/>
</dbReference>
<dbReference type="InterPro" id="IPR039395">
    <property type="entry name" value="Peptidase_C39-like_A"/>
</dbReference>
<dbReference type="InterPro" id="IPR039421">
    <property type="entry name" value="Type_1_exporter"/>
</dbReference>
<dbReference type="NCBIfam" id="TIGR01846">
    <property type="entry name" value="type_I_sec_HlyB"/>
    <property type="match status" value="1"/>
</dbReference>
<dbReference type="PANTHER" id="PTHR43394:SF1">
    <property type="entry name" value="ATP-BINDING CASSETTE SUB-FAMILY B MEMBER 10, MITOCHONDRIAL"/>
    <property type="match status" value="1"/>
</dbReference>
<dbReference type="PANTHER" id="PTHR43394">
    <property type="entry name" value="ATP-DEPENDENT PERMEASE MDL1, MITOCHONDRIAL"/>
    <property type="match status" value="1"/>
</dbReference>
<dbReference type="Pfam" id="PF00664">
    <property type="entry name" value="ABC_membrane"/>
    <property type="match status" value="1"/>
</dbReference>
<dbReference type="Pfam" id="PF00005">
    <property type="entry name" value="ABC_tran"/>
    <property type="match status" value="1"/>
</dbReference>
<dbReference type="Pfam" id="PF03412">
    <property type="entry name" value="Peptidase_C39"/>
    <property type="match status" value="1"/>
</dbReference>
<dbReference type="SMART" id="SM00382">
    <property type="entry name" value="AAA"/>
    <property type="match status" value="1"/>
</dbReference>
<dbReference type="SUPFAM" id="SSF90123">
    <property type="entry name" value="ABC transporter transmembrane region"/>
    <property type="match status" value="1"/>
</dbReference>
<dbReference type="SUPFAM" id="SSF52540">
    <property type="entry name" value="P-loop containing nucleoside triphosphate hydrolases"/>
    <property type="match status" value="1"/>
</dbReference>
<dbReference type="PROSITE" id="PS50929">
    <property type="entry name" value="ABC_TM1F"/>
    <property type="match status" value="1"/>
</dbReference>
<dbReference type="PROSITE" id="PS00211">
    <property type="entry name" value="ABC_TRANSPORTER_1"/>
    <property type="match status" value="1"/>
</dbReference>
<dbReference type="PROSITE" id="PS50893">
    <property type="entry name" value="ABC_TRANSPORTER_2"/>
    <property type="match status" value="1"/>
</dbReference>
<dbReference type="PROSITE" id="PS50990">
    <property type="entry name" value="PEPTIDASE_C39"/>
    <property type="match status" value="1"/>
</dbReference>
<evidence type="ECO:0000250" key="1"/>
<evidence type="ECO:0000255" key="2">
    <source>
        <dbReference type="PROSITE-ProRule" id="PRU00362"/>
    </source>
</evidence>
<evidence type="ECO:0000255" key="3">
    <source>
        <dbReference type="PROSITE-ProRule" id="PRU00434"/>
    </source>
</evidence>
<evidence type="ECO:0000255" key="4">
    <source>
        <dbReference type="PROSITE-ProRule" id="PRU00441"/>
    </source>
</evidence>
<evidence type="ECO:0000305" key="5"/>
<geneLocation type="plasmid">
    <name>pO157</name>
</geneLocation>